<name>ARLY_SYNS3</name>
<evidence type="ECO:0000255" key="1">
    <source>
        <dbReference type="HAMAP-Rule" id="MF_00006"/>
    </source>
</evidence>
<gene>
    <name evidence="1" type="primary">argH</name>
    <name type="ordered locus">sync_0013</name>
</gene>
<protein>
    <recommendedName>
        <fullName evidence="1">Argininosuccinate lyase</fullName>
        <shortName evidence="1">ASAL</shortName>
        <ecNumber evidence="1">4.3.2.1</ecNumber>
    </recommendedName>
    <alternativeName>
        <fullName evidence="1">Arginosuccinase</fullName>
    </alternativeName>
</protein>
<reference key="1">
    <citation type="journal article" date="2006" name="Proc. Natl. Acad. Sci. U.S.A.">
        <title>Genome sequence of Synechococcus CC9311: insights into adaptation to a coastal environment.</title>
        <authorList>
            <person name="Palenik B."/>
            <person name="Ren Q."/>
            <person name="Dupont C.L."/>
            <person name="Myers G.S."/>
            <person name="Heidelberg J.F."/>
            <person name="Badger J.H."/>
            <person name="Madupu R."/>
            <person name="Nelson W.C."/>
            <person name="Brinkac L.M."/>
            <person name="Dodson R.J."/>
            <person name="Durkin A.S."/>
            <person name="Daugherty S.C."/>
            <person name="Sullivan S.A."/>
            <person name="Khouri H."/>
            <person name="Mohamoud Y."/>
            <person name="Halpin R."/>
            <person name="Paulsen I.T."/>
        </authorList>
    </citation>
    <scope>NUCLEOTIDE SEQUENCE [LARGE SCALE GENOMIC DNA]</scope>
    <source>
        <strain>CC9311</strain>
    </source>
</reference>
<accession>Q0IE70</accession>
<proteinExistence type="inferred from homology"/>
<sequence>MAGGVTGGGSATWSDRFEQGLHPAIERFNASIGFDITLLQEDLDGSIAHARMLADCGVIQVEEADQLVGGLEQVRQEAASGLFQPGLADEDVHFAVERRLIALLGPVGKKLHTGRSRNDQVGTDLRLWLRRRLDELEQHLLGFQRALLDQANLHSNTLIPGYTHLQRAQPLCLAHHLLAYVEMVERDRQRMADLRKRLNLSPLGAAALAGTPVPIDRRSTASALGFDGIYANSLDAVSDRDFTVEFSAAASLVMVHLSRLAEEVIFWASEECGFVRLTDRCATGSSLMPQKKNPDVPELVRGKCGRVFGHLQGLLTMIKGLPLAYNKDFQEDKEALFDVVATTSQCLEAMTILLQEGLSFRTERLEAAVAADYSNATDVADYLVAKQVPFREAYQLVGAVVKHCLQEGVLLRELTLERWQQFHPAIEADLFEALTPRNVVAARTSEGGTGFDRVNEQLAIWNQRFGLADQVF</sequence>
<feature type="chain" id="PRO_1000000551" description="Argininosuccinate lyase">
    <location>
        <begin position="1"/>
        <end position="472"/>
    </location>
</feature>
<comment type="catalytic activity">
    <reaction evidence="1">
        <text>2-(N(omega)-L-arginino)succinate = fumarate + L-arginine</text>
        <dbReference type="Rhea" id="RHEA:24020"/>
        <dbReference type="ChEBI" id="CHEBI:29806"/>
        <dbReference type="ChEBI" id="CHEBI:32682"/>
        <dbReference type="ChEBI" id="CHEBI:57472"/>
        <dbReference type="EC" id="4.3.2.1"/>
    </reaction>
</comment>
<comment type="pathway">
    <text evidence="1">Amino-acid biosynthesis; L-arginine biosynthesis; L-arginine from L-ornithine and carbamoyl phosphate: step 3/3.</text>
</comment>
<comment type="subcellular location">
    <subcellularLocation>
        <location evidence="1">Cytoplasm</location>
    </subcellularLocation>
</comment>
<comment type="similarity">
    <text evidence="1">Belongs to the lyase 1 family. Argininosuccinate lyase subfamily.</text>
</comment>
<organism>
    <name type="scientific">Synechococcus sp. (strain CC9311)</name>
    <dbReference type="NCBI Taxonomy" id="64471"/>
    <lineage>
        <taxon>Bacteria</taxon>
        <taxon>Bacillati</taxon>
        <taxon>Cyanobacteriota</taxon>
        <taxon>Cyanophyceae</taxon>
        <taxon>Synechococcales</taxon>
        <taxon>Synechococcaceae</taxon>
        <taxon>Synechococcus</taxon>
    </lineage>
</organism>
<keyword id="KW-0028">Amino-acid biosynthesis</keyword>
<keyword id="KW-0055">Arginine biosynthesis</keyword>
<keyword id="KW-0963">Cytoplasm</keyword>
<keyword id="KW-0456">Lyase</keyword>
<keyword id="KW-1185">Reference proteome</keyword>
<dbReference type="EC" id="4.3.2.1" evidence="1"/>
<dbReference type="EMBL" id="CP000435">
    <property type="protein sequence ID" value="ABI46333.1"/>
    <property type="molecule type" value="Genomic_DNA"/>
</dbReference>
<dbReference type="RefSeq" id="WP_011618004.1">
    <property type="nucleotide sequence ID" value="NC_008319.1"/>
</dbReference>
<dbReference type="SMR" id="Q0IE70"/>
<dbReference type="STRING" id="64471.sync_0013"/>
<dbReference type="KEGG" id="syg:sync_0013"/>
<dbReference type="eggNOG" id="COG0165">
    <property type="taxonomic scope" value="Bacteria"/>
</dbReference>
<dbReference type="HOGENOM" id="CLU_027272_2_3_3"/>
<dbReference type="OrthoDB" id="9769623at2"/>
<dbReference type="UniPathway" id="UPA00068">
    <property type="reaction ID" value="UER00114"/>
</dbReference>
<dbReference type="Proteomes" id="UP000001961">
    <property type="component" value="Chromosome"/>
</dbReference>
<dbReference type="GO" id="GO:0005829">
    <property type="term" value="C:cytosol"/>
    <property type="evidence" value="ECO:0007669"/>
    <property type="project" value="TreeGrafter"/>
</dbReference>
<dbReference type="GO" id="GO:0004056">
    <property type="term" value="F:argininosuccinate lyase activity"/>
    <property type="evidence" value="ECO:0007669"/>
    <property type="project" value="UniProtKB-UniRule"/>
</dbReference>
<dbReference type="GO" id="GO:0042450">
    <property type="term" value="P:arginine biosynthetic process via ornithine"/>
    <property type="evidence" value="ECO:0007669"/>
    <property type="project" value="InterPro"/>
</dbReference>
<dbReference type="GO" id="GO:0006526">
    <property type="term" value="P:L-arginine biosynthetic process"/>
    <property type="evidence" value="ECO:0007669"/>
    <property type="project" value="UniProtKB-UniRule"/>
</dbReference>
<dbReference type="CDD" id="cd01359">
    <property type="entry name" value="Argininosuccinate_lyase"/>
    <property type="match status" value="1"/>
</dbReference>
<dbReference type="FunFam" id="1.10.275.10:FF:000002">
    <property type="entry name" value="Argininosuccinate lyase"/>
    <property type="match status" value="1"/>
</dbReference>
<dbReference type="FunFam" id="1.10.40.30:FF:000001">
    <property type="entry name" value="Argininosuccinate lyase"/>
    <property type="match status" value="1"/>
</dbReference>
<dbReference type="FunFam" id="1.20.200.10:FF:000015">
    <property type="entry name" value="argininosuccinate lyase isoform X2"/>
    <property type="match status" value="1"/>
</dbReference>
<dbReference type="Gene3D" id="1.10.40.30">
    <property type="entry name" value="Fumarase/aspartase (C-terminal domain)"/>
    <property type="match status" value="1"/>
</dbReference>
<dbReference type="Gene3D" id="1.20.200.10">
    <property type="entry name" value="Fumarase/aspartase (Central domain)"/>
    <property type="match status" value="1"/>
</dbReference>
<dbReference type="Gene3D" id="1.10.275.10">
    <property type="entry name" value="Fumarase/aspartase (N-terminal domain)"/>
    <property type="match status" value="1"/>
</dbReference>
<dbReference type="HAMAP" id="MF_00006">
    <property type="entry name" value="Arg_succ_lyase"/>
    <property type="match status" value="1"/>
</dbReference>
<dbReference type="InterPro" id="IPR029419">
    <property type="entry name" value="Arg_succ_lyase_C"/>
</dbReference>
<dbReference type="InterPro" id="IPR009049">
    <property type="entry name" value="Argininosuccinate_lyase"/>
</dbReference>
<dbReference type="InterPro" id="IPR024083">
    <property type="entry name" value="Fumarase/histidase_N"/>
</dbReference>
<dbReference type="InterPro" id="IPR020557">
    <property type="entry name" value="Fumarate_lyase_CS"/>
</dbReference>
<dbReference type="InterPro" id="IPR000362">
    <property type="entry name" value="Fumarate_lyase_fam"/>
</dbReference>
<dbReference type="InterPro" id="IPR022761">
    <property type="entry name" value="Fumarate_lyase_N"/>
</dbReference>
<dbReference type="InterPro" id="IPR008948">
    <property type="entry name" value="L-Aspartase-like"/>
</dbReference>
<dbReference type="NCBIfam" id="TIGR00838">
    <property type="entry name" value="argH"/>
    <property type="match status" value="1"/>
</dbReference>
<dbReference type="PANTHER" id="PTHR43814">
    <property type="entry name" value="ARGININOSUCCINATE LYASE"/>
    <property type="match status" value="1"/>
</dbReference>
<dbReference type="PANTHER" id="PTHR43814:SF1">
    <property type="entry name" value="ARGININOSUCCINATE LYASE"/>
    <property type="match status" value="1"/>
</dbReference>
<dbReference type="Pfam" id="PF14698">
    <property type="entry name" value="ASL_C2"/>
    <property type="match status" value="1"/>
</dbReference>
<dbReference type="Pfam" id="PF00206">
    <property type="entry name" value="Lyase_1"/>
    <property type="match status" value="1"/>
</dbReference>
<dbReference type="PRINTS" id="PR00145">
    <property type="entry name" value="ARGSUCLYASE"/>
</dbReference>
<dbReference type="PRINTS" id="PR00149">
    <property type="entry name" value="FUMRATELYASE"/>
</dbReference>
<dbReference type="SUPFAM" id="SSF48557">
    <property type="entry name" value="L-aspartase-like"/>
    <property type="match status" value="1"/>
</dbReference>
<dbReference type="PROSITE" id="PS00163">
    <property type="entry name" value="FUMARATE_LYASES"/>
    <property type="match status" value="1"/>
</dbReference>